<keyword id="KW-0007">Acetylation</keyword>
<keyword id="KW-0963">Cytoplasm</keyword>
<keyword id="KW-0903">Direct protein sequencing</keyword>
<keyword id="KW-1015">Disulfide bond</keyword>
<keyword id="KW-0496">Mitochondrion</keyword>
<keyword id="KW-0597">Phosphoprotein</keyword>
<keyword id="KW-0676">Redox-active center</keyword>
<keyword id="KW-1185">Reference proteome</keyword>
<keyword id="KW-0677">Repeat</keyword>
<keyword id="KW-0770">Synapse</keyword>
<keyword id="KW-0771">Synaptosome</keyword>
<keyword id="KW-0808">Transferase</keyword>
<reference key="1">
    <citation type="journal article" date="1996" name="J. Biol. Chem.">
        <title>Role of amino acid residues in the active site of rat liver mercaptopyruvate sulfurtransferase. cDNA cloning, overexpression, and site-directed mutagenesis.</title>
        <authorList>
            <person name="Nagahara N."/>
            <person name="Nishino T."/>
        </authorList>
    </citation>
    <scope>NUCLEOTIDE SEQUENCE [MRNA]</scope>
    <scope>PROTEIN SEQUENCE OF 9-77 AND 147-285</scope>
    <scope>ACTIVE SITE</scope>
    <scope>MUTAGENESIS OF ARG-188; ARG-197; CYS-248 AND SER-250</scope>
    <scope>FUNCTION</scope>
    <scope>CATALYTIC ACTIVITY</scope>
    <source>
        <strain>Wistar</strain>
        <tissue>Liver</tissue>
    </source>
</reference>
<reference key="2">
    <citation type="journal article" date="2004" name="Genome Res.">
        <title>The status, quality, and expansion of the NIH full-length cDNA project: the Mammalian Gene Collection (MGC).</title>
        <authorList>
            <consortium name="The MGC Project Team"/>
        </authorList>
    </citation>
    <scope>NUCLEOTIDE SEQUENCE [LARGE SCALE MRNA]</scope>
    <source>
        <tissue>Ovary</tissue>
    </source>
</reference>
<reference key="3">
    <citation type="journal article" date="1995" name="J. Biol. Chem.">
        <title>Cytosolic mercaptopyruvate sulfurtransferase is evolutionarily related to mitochondrial rhodanese. Striking similarity in active site amino acid sequence and the increase in the mercaptopyruvate sulfurtransferase activity of rhodanese by site-directed mutagenesis.</title>
        <authorList>
            <person name="Nagahara N."/>
            <person name="Okazaki T."/>
            <person name="Nishino T."/>
        </authorList>
    </citation>
    <scope>PROTEIN SEQUENCE OF 9-77 AND 147-285</scope>
    <scope>CHARACTERIZATION</scope>
    <source>
        <strain>Wistar</strain>
        <tissue>Liver</tissue>
    </source>
</reference>
<reference key="4">
    <citation type="submission" date="2006-11" db="UniProtKB">
        <authorList>
            <person name="Lubec G."/>
            <person name="Afjehi-Sadat L."/>
        </authorList>
    </citation>
    <scope>PROTEIN SEQUENCE OF 53-64 AND 119-164</scope>
    <scope>IDENTIFICATION BY MASS SPECTROMETRY</scope>
    <source>
        <strain>Sprague-Dawley</strain>
        <tissue>Spinal cord</tissue>
    </source>
</reference>
<reference key="5">
    <citation type="journal article" date="1998" name="Histochem. Cell Biol.">
        <title>Tissue and subcellular distribution of mercaptopyruvate sulfurtransferase in the rat: confocal laser fluorescence and immunoelectron microscopic studies combined with biochemical analysis.</title>
        <authorList>
            <person name="Nagahara N."/>
            <person name="Ito T."/>
            <person name="Kitamura H."/>
            <person name="Nishino T."/>
        </authorList>
    </citation>
    <scope>SUBCELLULAR LOCATION</scope>
    <scope>TISSUE SPECIFICITY</scope>
    <scope>FUNCTION</scope>
    <scope>CATALYTIC ACTIVITY</scope>
</reference>
<reference key="6">
    <citation type="journal article" date="2005" name="J. Biol. Chem.">
        <title>Post-translational regulation of mercaptopyruvate sulfurtransferase via a low redox potential cysteine-sulfenate in the maintenance of redox homeostasis.</title>
        <authorList>
            <person name="Nagahara N."/>
            <person name="Katayama A."/>
        </authorList>
    </citation>
    <scope>FUNCTION</scope>
    <scope>ACTIVITY REGULATION</scope>
    <scope>IDENTIFICATION BY MASS SPECTROMETRY</scope>
    <scope>MUTAGENESIS OF CYS-65; CYS-155; CYS-248; CYS-255 AND CYS-264</scope>
</reference>
<reference key="7">
    <citation type="journal article" date="2007" name="J. Biol. Chem.">
        <title>Thioredoxin-dependent enzymatic activation of mercaptopyruvate sulfurtransferase. An intersubunit disulfide bond serves as a redox switch for activation.</title>
        <authorList>
            <person name="Nagahara N."/>
            <person name="Yoshii T."/>
            <person name="Abe Y."/>
            <person name="Matsumura T."/>
        </authorList>
    </citation>
    <scope>ACTIVITY REGULATION</scope>
    <scope>SUBUNIT</scope>
</reference>
<reference key="8">
    <citation type="journal article" date="2009" name="J. Biochem.">
        <title>Vascular endothelium expresses 3-mercaptopyruvate sulfurtransferase and produces hydrogen sulfide.</title>
        <authorList>
            <person name="Shibuya N."/>
            <person name="Mikami Y."/>
            <person name="Kimura Y."/>
            <person name="Nagahara N."/>
            <person name="Kimura H."/>
        </authorList>
    </citation>
    <scope>FUNCTION</scope>
    <scope>TISSUE SPECIFICITY</scope>
</reference>
<dbReference type="EC" id="2.8.1.2" evidence="8 9"/>
<dbReference type="EMBL" id="D50564">
    <property type="protein sequence ID" value="BAA09127.1"/>
    <property type="molecule type" value="mRNA"/>
</dbReference>
<dbReference type="EMBL" id="BC086575">
    <property type="protein sequence ID" value="AAH86575.1"/>
    <property type="molecule type" value="mRNA"/>
</dbReference>
<dbReference type="PIR" id="A57483">
    <property type="entry name" value="A57483"/>
</dbReference>
<dbReference type="RefSeq" id="NP_620198.1">
    <property type="nucleotide sequence ID" value="NM_138843.2"/>
</dbReference>
<dbReference type="RefSeq" id="XP_063119029.1">
    <property type="nucleotide sequence ID" value="XM_063262959.1"/>
</dbReference>
<dbReference type="RefSeq" id="XP_063119030.1">
    <property type="nucleotide sequence ID" value="XM_063262960.1"/>
</dbReference>
<dbReference type="SMR" id="P97532"/>
<dbReference type="FunCoup" id="P97532">
    <property type="interactions" value="1554"/>
</dbReference>
<dbReference type="STRING" id="10116.ENSRNOP00000000201"/>
<dbReference type="iPTMnet" id="P97532"/>
<dbReference type="PhosphoSitePlus" id="P97532"/>
<dbReference type="SwissPalm" id="P97532"/>
<dbReference type="jPOST" id="P97532"/>
<dbReference type="PaxDb" id="10116-ENSRNOP00000000201"/>
<dbReference type="Ensembl" id="ENSRNOT00000000201.6">
    <property type="protein sequence ID" value="ENSRNOP00000000201.2"/>
    <property type="gene ID" value="ENSRNOG00000000185.6"/>
</dbReference>
<dbReference type="GeneID" id="192172"/>
<dbReference type="KEGG" id="rno:192172"/>
<dbReference type="UCSC" id="RGD:620065">
    <property type="organism name" value="rat"/>
</dbReference>
<dbReference type="AGR" id="RGD:620065"/>
<dbReference type="CTD" id="4357"/>
<dbReference type="RGD" id="620065">
    <property type="gene designation" value="Mpst"/>
</dbReference>
<dbReference type="eggNOG" id="KOG1529">
    <property type="taxonomic scope" value="Eukaryota"/>
</dbReference>
<dbReference type="GeneTree" id="ENSGT00510000046773"/>
<dbReference type="HOGENOM" id="CLU_031618_3_1_1"/>
<dbReference type="InParanoid" id="P97532"/>
<dbReference type="OMA" id="NNNWFAS"/>
<dbReference type="OrthoDB" id="270167at2759"/>
<dbReference type="PhylomeDB" id="P97532"/>
<dbReference type="TreeFam" id="TF315133"/>
<dbReference type="BioCyc" id="MetaCyc:MONOMER-12473"/>
<dbReference type="BRENDA" id="2.8.1.2">
    <property type="organism ID" value="5301"/>
</dbReference>
<dbReference type="Reactome" id="R-RNO-1614558">
    <property type="pathway name" value="Degradation of cysteine and homocysteine"/>
</dbReference>
<dbReference type="SABIO-RK" id="P97532"/>
<dbReference type="PRO" id="PR:P97532"/>
<dbReference type="Proteomes" id="UP000002494">
    <property type="component" value="Chromosome 7"/>
</dbReference>
<dbReference type="Bgee" id="ENSRNOG00000000185">
    <property type="expression patterns" value="Expressed in adult mammalian kidney and 19 other cell types or tissues"/>
</dbReference>
<dbReference type="GO" id="GO:0005737">
    <property type="term" value="C:cytoplasm"/>
    <property type="evidence" value="ECO:0000314"/>
    <property type="project" value="UniProtKB"/>
</dbReference>
<dbReference type="GO" id="GO:0005739">
    <property type="term" value="C:mitochondrion"/>
    <property type="evidence" value="ECO:0000314"/>
    <property type="project" value="UniProtKB"/>
</dbReference>
<dbReference type="GO" id="GO:0043005">
    <property type="term" value="C:neuron projection"/>
    <property type="evidence" value="ECO:0000250"/>
    <property type="project" value="UniProtKB"/>
</dbReference>
<dbReference type="GO" id="GO:0045202">
    <property type="term" value="C:synapse"/>
    <property type="evidence" value="ECO:0007669"/>
    <property type="project" value="UniProtKB-SubCell"/>
</dbReference>
<dbReference type="GO" id="GO:0016784">
    <property type="term" value="F:3-mercaptopyruvate sulfurtransferase activity"/>
    <property type="evidence" value="ECO:0000266"/>
    <property type="project" value="RGD"/>
</dbReference>
<dbReference type="GO" id="GO:0042802">
    <property type="term" value="F:identical protein binding"/>
    <property type="evidence" value="ECO:0000314"/>
    <property type="project" value="RGD"/>
</dbReference>
<dbReference type="GO" id="GO:0004792">
    <property type="term" value="F:thiosulfate-cyanide sulfurtransferase activity"/>
    <property type="evidence" value="ECO:0000314"/>
    <property type="project" value="RGD"/>
</dbReference>
<dbReference type="GO" id="GO:0070814">
    <property type="term" value="P:hydrogen sulfide biosynthetic process"/>
    <property type="evidence" value="ECO:0000250"/>
    <property type="project" value="UniProtKB"/>
</dbReference>
<dbReference type="GO" id="GO:0001822">
    <property type="term" value="P:kidney development"/>
    <property type="evidence" value="ECO:0000314"/>
    <property type="project" value="RGD"/>
</dbReference>
<dbReference type="GO" id="GO:0001889">
    <property type="term" value="P:liver development"/>
    <property type="evidence" value="ECO:0000314"/>
    <property type="project" value="RGD"/>
</dbReference>
<dbReference type="GO" id="GO:0021510">
    <property type="term" value="P:spinal cord development"/>
    <property type="evidence" value="ECO:0000270"/>
    <property type="project" value="RGD"/>
</dbReference>
<dbReference type="GO" id="GO:0019346">
    <property type="term" value="P:transsulfuration"/>
    <property type="evidence" value="ECO:0000314"/>
    <property type="project" value="RGD"/>
</dbReference>
<dbReference type="CDD" id="cd01448">
    <property type="entry name" value="TST_Repeat_1"/>
    <property type="match status" value="1"/>
</dbReference>
<dbReference type="CDD" id="cd01449">
    <property type="entry name" value="TST_Repeat_2"/>
    <property type="match status" value="1"/>
</dbReference>
<dbReference type="FunFam" id="3.40.250.10:FF:000001">
    <property type="entry name" value="Sulfurtransferase"/>
    <property type="match status" value="1"/>
</dbReference>
<dbReference type="FunFam" id="3.40.250.10:FF:000008">
    <property type="entry name" value="Sulfurtransferase"/>
    <property type="match status" value="1"/>
</dbReference>
<dbReference type="Gene3D" id="3.40.250.10">
    <property type="entry name" value="Rhodanese-like domain"/>
    <property type="match status" value="2"/>
</dbReference>
<dbReference type="InterPro" id="IPR001763">
    <property type="entry name" value="Rhodanese-like_dom"/>
</dbReference>
<dbReference type="InterPro" id="IPR036873">
    <property type="entry name" value="Rhodanese-like_dom_sf"/>
</dbReference>
<dbReference type="InterPro" id="IPR001307">
    <property type="entry name" value="Thiosulphate_STrfase_CS"/>
</dbReference>
<dbReference type="InterPro" id="IPR045078">
    <property type="entry name" value="TST/MPST-like"/>
</dbReference>
<dbReference type="NCBIfam" id="NF008557">
    <property type="entry name" value="PRK11493.1"/>
    <property type="match status" value="1"/>
</dbReference>
<dbReference type="PANTHER" id="PTHR11364:SF25">
    <property type="entry name" value="3-MERCAPTOPYRUVATE SULFURTRANSFERASE"/>
    <property type="match status" value="1"/>
</dbReference>
<dbReference type="PANTHER" id="PTHR11364">
    <property type="entry name" value="THIOSULFATE SULFERTANSFERASE"/>
    <property type="match status" value="1"/>
</dbReference>
<dbReference type="Pfam" id="PF00581">
    <property type="entry name" value="Rhodanese"/>
    <property type="match status" value="2"/>
</dbReference>
<dbReference type="SMART" id="SM00450">
    <property type="entry name" value="RHOD"/>
    <property type="match status" value="2"/>
</dbReference>
<dbReference type="SUPFAM" id="SSF52821">
    <property type="entry name" value="Rhodanese/Cell cycle control phosphatase"/>
    <property type="match status" value="2"/>
</dbReference>
<dbReference type="PROSITE" id="PS00380">
    <property type="entry name" value="RHODANESE_1"/>
    <property type="match status" value="1"/>
</dbReference>
<dbReference type="PROSITE" id="PS00683">
    <property type="entry name" value="RHODANESE_2"/>
    <property type="match status" value="1"/>
</dbReference>
<dbReference type="PROSITE" id="PS50206">
    <property type="entry name" value="RHODANESE_3"/>
    <property type="match status" value="2"/>
</dbReference>
<name>THTM_RAT</name>
<accession>P97532</accession>
<protein>
    <recommendedName>
        <fullName>3-mercaptopyruvate sulfurtransferase</fullName>
        <shortName>MST</shortName>
        <ecNumber evidence="8 9">2.8.1.2</ecNumber>
    </recommendedName>
</protein>
<gene>
    <name type="primary">Mpst</name>
</gene>
<evidence type="ECO:0000250" key="1"/>
<evidence type="ECO:0000250" key="2">
    <source>
        <dbReference type="UniProtKB" id="P25325"/>
    </source>
</evidence>
<evidence type="ECO:0000250" key="3">
    <source>
        <dbReference type="UniProtKB" id="Q99J99"/>
    </source>
</evidence>
<evidence type="ECO:0000255" key="4">
    <source>
        <dbReference type="PROSITE-ProRule" id="PRU00173"/>
    </source>
</evidence>
<evidence type="ECO:0000269" key="5">
    <source>
    </source>
</evidence>
<evidence type="ECO:0000269" key="6">
    <source>
    </source>
</evidence>
<evidence type="ECO:0000269" key="7">
    <source>
    </source>
</evidence>
<evidence type="ECO:0000269" key="8">
    <source>
    </source>
</evidence>
<evidence type="ECO:0000269" key="9">
    <source>
    </source>
</evidence>
<comment type="function">
    <text evidence="5 7 8 9">Transfer of a sulfur ion to cyanide or to other thiol compounds. Also has weak rhodanese activity. Detoxifies cyanide and is required for thiosulfate biosynthesis. Acts as an antioxidant. In combination with cysteine aminotransferase (CAT), contributes to the catabolism of cysteine and is an important producer of hydrogen sulfide in the brain, retina and vascular endothelial cells. Hydrogen sulfide H(2)S is an important synaptic modulator, signaling molecule, smooth muscle contractor and neuroprotectant. Its production by the 3MST/CAT pathway is regulated by calcium ions.</text>
</comment>
<comment type="catalytic activity">
    <reaction evidence="8 9">
        <text>2-oxo-3-sulfanylpropanoate + [thioredoxin]-dithiol = [thioredoxin]-disulfide + hydrogen sulfide + pyruvate + H(+)</text>
        <dbReference type="Rhea" id="RHEA:21740"/>
        <dbReference type="Rhea" id="RHEA-COMP:10698"/>
        <dbReference type="Rhea" id="RHEA-COMP:10700"/>
        <dbReference type="ChEBI" id="CHEBI:15361"/>
        <dbReference type="ChEBI" id="CHEBI:15378"/>
        <dbReference type="ChEBI" id="CHEBI:29919"/>
        <dbReference type="ChEBI" id="CHEBI:29950"/>
        <dbReference type="ChEBI" id="CHEBI:50058"/>
        <dbReference type="ChEBI" id="CHEBI:57678"/>
        <dbReference type="EC" id="2.8.1.2"/>
    </reaction>
</comment>
<comment type="activity regulation">
    <text evidence="5 6">By oxidative stress, and thioredoxin. Under oxidative stress conditions, the catalytic cysteine site is converted to a sulfenate which inhibits the MPST enzyme activity. Reduced thioredoxin cleaves an intersubunit disulfide bond to turn on the redox switch and reactivate the enzyme. Inhibited by different oxidants, hydrogen peroxide and tetrathionate.</text>
</comment>
<comment type="subunit">
    <text evidence="6">Monomer (active form). Homodimer; disulfide-linked (inactive form).</text>
</comment>
<comment type="subcellular location">
    <subcellularLocation>
        <location evidence="9">Cytoplasm</location>
    </subcellularLocation>
    <subcellularLocation>
        <location evidence="9">Mitochondrion</location>
    </subcellularLocation>
    <subcellularLocation>
        <location evidence="3">Synapse</location>
        <location evidence="3">Synaptosome</location>
    </subcellularLocation>
</comment>
<comment type="tissue specificity">
    <text evidence="7 9">Expressed in liver, heart, kidney and brain. Localizes to tubular epithelium in the kidney, pericentral hepatocytes in the liver, cardiac cells in the heart and neuroglial cells in the brain. Also expressed in vascular endothelium of the thoracic aorta. Weak expression in lung and thymus.</text>
</comment>
<comment type="domain">
    <text evidence="1">Contains two rhodanese domains with different primary structures but with near identical secondary structure conformations suggesting a common evolutionary origin. Only the C-terminal rhodanese domain contains the catalytic cysteine residue (By similarity).</text>
</comment>
<comment type="PTM">
    <text>The N-terminus is blocked.</text>
</comment>
<comment type="miscellaneous">
    <text evidence="3">Thioredoxin (Trx) or dihydrolipoic acid (DHLA) are required to release hydrogen sulfide from the persulfide intermediate.</text>
</comment>
<feature type="initiator methionine" description="Removed" evidence="2">
    <location>
        <position position="1"/>
    </location>
</feature>
<feature type="chain" id="PRO_0000139400" description="3-mercaptopyruvate sulfurtransferase">
    <location>
        <begin position="2"/>
        <end position="297"/>
    </location>
</feature>
<feature type="domain" description="Rhodanese 1" evidence="4">
    <location>
        <begin position="25"/>
        <end position="144"/>
    </location>
</feature>
<feature type="domain" description="Rhodanese 2" evidence="4">
    <location>
        <begin position="174"/>
        <end position="288"/>
    </location>
</feature>
<feature type="region of interest" description="Hinge">
    <location>
        <begin position="145"/>
        <end position="160"/>
    </location>
</feature>
<feature type="active site" description="Cysteine persulfide intermediate" evidence="4 8">
    <location>
        <position position="248"/>
    </location>
</feature>
<feature type="binding site" evidence="1">
    <location>
        <position position="188"/>
    </location>
    <ligand>
        <name>substrate</name>
    </ligand>
</feature>
<feature type="modified residue" description="N-acetylalanine" evidence="2">
    <location>
        <position position="2"/>
    </location>
</feature>
<feature type="modified residue" description="Phosphoserine" evidence="2">
    <location>
        <position position="35"/>
    </location>
</feature>
<feature type="modified residue" description="N6-acetyllysine; alternate" evidence="3">
    <location>
        <position position="40"/>
    </location>
</feature>
<feature type="modified residue" description="N6-succinyllysine; alternate" evidence="3">
    <location>
        <position position="40"/>
    </location>
</feature>
<feature type="modified residue" description="N6-succinyllysine" evidence="3">
    <location>
        <position position="146"/>
    </location>
</feature>
<feature type="modified residue" description="N6-succinyllysine" evidence="3">
    <location>
        <position position="164"/>
    </location>
</feature>
<feature type="disulfide bond" description="Interchain (with C-155 or C-264); redox-active" evidence="1">
    <location>
        <position position="155"/>
    </location>
</feature>
<feature type="disulfide bond" description="Interchain (with C-155 or C-264); redox-active" evidence="1">
    <location>
        <position position="264"/>
    </location>
</feature>
<feature type="mutagenesis site" description="No effect on redox potential." evidence="5">
    <original>C</original>
    <variation>S</variation>
    <location>
        <position position="65"/>
    </location>
</feature>
<feature type="mutagenesis site" description="No effect on redox potential." evidence="5">
    <original>C</original>
    <variation>S</variation>
    <location>
        <position position="155"/>
    </location>
</feature>
<feature type="mutagenesis site" description="Large decrease in MST activity; some decrease in rhodanese activity." evidence="8">
    <original>R</original>
    <variation>G</variation>
    <location>
        <position position="188"/>
    </location>
</feature>
<feature type="mutagenesis site" description="Decreased MST activity; increased rhodanese activity." evidence="8">
    <original>R</original>
    <variation>G</variation>
    <location>
        <position position="197"/>
    </location>
</feature>
<feature type="mutagenesis site" description="Loss of both enzyme activities. Greatly reduced redox potential." evidence="5 8">
    <original>C</original>
    <variation>S</variation>
    <location>
        <position position="248"/>
    </location>
</feature>
<feature type="mutagenesis site" description="Decreased MST activity; increased rhodanese activity.">
    <original>G</original>
    <variation>R</variation>
    <location>
        <position position="249"/>
    </location>
</feature>
<feature type="mutagenesis site" description="Slight decrease in MST activity." evidence="8">
    <original>S</original>
    <variation>A</variation>
    <location>
        <position position="250"/>
    </location>
</feature>
<feature type="mutagenesis site" description="Slight decrease in MST activity; increased rhodanese activity." evidence="8">
    <original>S</original>
    <variation>K</variation>
    <location>
        <position position="250"/>
    </location>
</feature>
<feature type="mutagenesis site" description="Little change in redox potential." evidence="5">
    <original>C</original>
    <variation>S</variation>
    <location>
        <position position="255"/>
    </location>
</feature>
<feature type="mutagenesis site" description="Greatly reduced redox potential." evidence="5">
    <original>C</original>
    <variation>S</variation>
    <location>
        <position position="264"/>
    </location>
</feature>
<organism>
    <name type="scientific">Rattus norvegicus</name>
    <name type="common">Rat</name>
    <dbReference type="NCBI Taxonomy" id="10116"/>
    <lineage>
        <taxon>Eukaryota</taxon>
        <taxon>Metazoa</taxon>
        <taxon>Chordata</taxon>
        <taxon>Craniata</taxon>
        <taxon>Vertebrata</taxon>
        <taxon>Euteleostomi</taxon>
        <taxon>Mammalia</taxon>
        <taxon>Eutheria</taxon>
        <taxon>Euarchontoglires</taxon>
        <taxon>Glires</taxon>
        <taxon>Rodentia</taxon>
        <taxon>Myomorpha</taxon>
        <taxon>Muroidea</taxon>
        <taxon>Muridae</taxon>
        <taxon>Murinae</taxon>
        <taxon>Rattus</taxon>
    </lineage>
</organism>
<sequence length="297" mass="32940">MAAPQLFRALVSAQWVAEALKSPRASQPLKLLDASWYLPKLGRDARREFEERHIPGAAFFDIDRCSDHTSPYDHMLPSATHFADYAGSLGVSAATHVVIYDGSDQGLYSAPRVWWMFRAFGHHSVSLLDGGFRYWLSQNLPISSGKSPSEPAEFCAQLDPSFIKTHEDILENLDARRFQVVDARAAGRFQGTQPEPRDGIEPGHIPGSVNIPFTEFLTSEGLEKSPEEIQRLFQEKKVDLSKPLVATCGSGVTACHVVLGAFLCGKPDVPVYDGSWVEWYMRAQPEHVISQGRGKTL</sequence>
<proteinExistence type="evidence at protein level"/>